<feature type="chain" id="PRO_0000065731" description="Mediator of RNA polymerase II transcription subunit 20">
    <location>
        <begin position="1"/>
        <end position="212"/>
    </location>
</feature>
<feature type="splice variant" id="VSP_057052" description="In isoform 2." evidence="6">
    <original>YQYCDFLVKVGTVTMGPSARGISVEVEYGPCVVASDCWSLLLEFLQSFLGSHTPGAPAVFGNRHDAVYGPADTMVQYMELFNKIRKQQQVPVAGIR</original>
    <variation>WSMAPVW</variation>
    <location>
        <begin position="117"/>
        <end position="212"/>
    </location>
</feature>
<feature type="sequence conflict" description="In Ref. 1; AAD16169." evidence="7" ref="1">
    <original>SAR</original>
    <variation>VP</variation>
    <location>
        <begin position="134"/>
        <end position="136"/>
    </location>
</feature>
<feature type="sequence conflict" description="In Ref. 1; AAD16169." evidence="7" ref="1">
    <location>
        <begin position="206"/>
        <end position="207"/>
    </location>
</feature>
<feature type="strand" evidence="8">
    <location>
        <begin position="3"/>
        <end position="9"/>
    </location>
</feature>
<feature type="strand" evidence="8">
    <location>
        <begin position="13"/>
        <end position="15"/>
    </location>
</feature>
<feature type="helix" evidence="8">
    <location>
        <begin position="17"/>
        <end position="31"/>
    </location>
</feature>
<feature type="strand" evidence="8">
    <location>
        <begin position="34"/>
        <end position="47"/>
    </location>
</feature>
<feature type="strand" evidence="8">
    <location>
        <begin position="62"/>
        <end position="67"/>
    </location>
</feature>
<feature type="strand" evidence="8">
    <location>
        <begin position="69"/>
        <end position="71"/>
    </location>
</feature>
<feature type="strand" evidence="8">
    <location>
        <begin position="74"/>
        <end position="82"/>
    </location>
</feature>
<feature type="strand" evidence="8">
    <location>
        <begin position="84"/>
        <end position="88"/>
    </location>
</feature>
<feature type="helix" evidence="8">
    <location>
        <begin position="91"/>
        <end position="98"/>
    </location>
</feature>
<feature type="strand" evidence="8">
    <location>
        <begin position="100"/>
        <end position="103"/>
    </location>
</feature>
<feature type="strand" evidence="8">
    <location>
        <begin position="110"/>
        <end position="131"/>
    </location>
</feature>
<feature type="strand" evidence="8">
    <location>
        <begin position="134"/>
        <end position="146"/>
    </location>
</feature>
<feature type="turn" evidence="8">
    <location>
        <begin position="150"/>
        <end position="152"/>
    </location>
</feature>
<feature type="helix" evidence="8">
    <location>
        <begin position="154"/>
        <end position="164"/>
    </location>
</feature>
<feature type="helix" evidence="8">
    <location>
        <begin position="174"/>
        <end position="177"/>
    </location>
</feature>
<feature type="helix" evidence="8">
    <location>
        <begin position="186"/>
        <end position="203"/>
    </location>
</feature>
<organism>
    <name type="scientific">Homo sapiens</name>
    <name type="common">Human</name>
    <dbReference type="NCBI Taxonomy" id="9606"/>
    <lineage>
        <taxon>Eukaryota</taxon>
        <taxon>Metazoa</taxon>
        <taxon>Chordata</taxon>
        <taxon>Craniata</taxon>
        <taxon>Vertebrata</taxon>
        <taxon>Euteleostomi</taxon>
        <taxon>Mammalia</taxon>
        <taxon>Eutheria</taxon>
        <taxon>Euarchontoglires</taxon>
        <taxon>Primates</taxon>
        <taxon>Haplorrhini</taxon>
        <taxon>Catarrhini</taxon>
        <taxon>Hominidae</taxon>
        <taxon>Homo</taxon>
    </lineage>
</organism>
<reference key="1">
    <citation type="journal article" date="1999" name="J. Biol. Chem.">
        <title>The human homologue of Drosophila TRF-proximal protein is associated with an RNA polymerase II-SRB complex.</title>
        <authorList>
            <person name="Xiao H."/>
            <person name="Tao Y."/>
            <person name="Roeder R.G."/>
        </authorList>
    </citation>
    <scope>NUCLEOTIDE SEQUENCE [MRNA] (ISOFORM 1)</scope>
    <scope>PROTEIN SEQUENCE OF 16-26; 36-51 AND 205-212</scope>
    <scope>INTERACTION WITH RNA POLYMERASE II AND MED21</scope>
</reference>
<reference key="2">
    <citation type="journal article" date="2004" name="Nat. Genet.">
        <title>Complete sequencing and characterization of 21,243 full-length human cDNAs.</title>
        <authorList>
            <person name="Ota T."/>
            <person name="Suzuki Y."/>
            <person name="Nishikawa T."/>
            <person name="Otsuki T."/>
            <person name="Sugiyama T."/>
            <person name="Irie R."/>
            <person name="Wakamatsu A."/>
            <person name="Hayashi K."/>
            <person name="Sato H."/>
            <person name="Nagai K."/>
            <person name="Kimura K."/>
            <person name="Makita H."/>
            <person name="Sekine M."/>
            <person name="Obayashi M."/>
            <person name="Nishi T."/>
            <person name="Shibahara T."/>
            <person name="Tanaka T."/>
            <person name="Ishii S."/>
            <person name="Yamamoto J."/>
            <person name="Saito K."/>
            <person name="Kawai Y."/>
            <person name="Isono Y."/>
            <person name="Nakamura Y."/>
            <person name="Nagahari K."/>
            <person name="Murakami K."/>
            <person name="Yasuda T."/>
            <person name="Iwayanagi T."/>
            <person name="Wagatsuma M."/>
            <person name="Shiratori A."/>
            <person name="Sudo H."/>
            <person name="Hosoiri T."/>
            <person name="Kaku Y."/>
            <person name="Kodaira H."/>
            <person name="Kondo H."/>
            <person name="Sugawara M."/>
            <person name="Takahashi M."/>
            <person name="Kanda K."/>
            <person name="Yokoi T."/>
            <person name="Furuya T."/>
            <person name="Kikkawa E."/>
            <person name="Omura Y."/>
            <person name="Abe K."/>
            <person name="Kamihara K."/>
            <person name="Katsuta N."/>
            <person name="Sato K."/>
            <person name="Tanikawa M."/>
            <person name="Yamazaki M."/>
            <person name="Ninomiya K."/>
            <person name="Ishibashi T."/>
            <person name="Yamashita H."/>
            <person name="Murakawa K."/>
            <person name="Fujimori K."/>
            <person name="Tanai H."/>
            <person name="Kimata M."/>
            <person name="Watanabe M."/>
            <person name="Hiraoka S."/>
            <person name="Chiba Y."/>
            <person name="Ishida S."/>
            <person name="Ono Y."/>
            <person name="Takiguchi S."/>
            <person name="Watanabe S."/>
            <person name="Yosida M."/>
            <person name="Hotuta T."/>
            <person name="Kusano J."/>
            <person name="Kanehori K."/>
            <person name="Takahashi-Fujii A."/>
            <person name="Hara H."/>
            <person name="Tanase T.-O."/>
            <person name="Nomura Y."/>
            <person name="Togiya S."/>
            <person name="Komai F."/>
            <person name="Hara R."/>
            <person name="Takeuchi K."/>
            <person name="Arita M."/>
            <person name="Imose N."/>
            <person name="Musashino K."/>
            <person name="Yuuki H."/>
            <person name="Oshima A."/>
            <person name="Sasaki N."/>
            <person name="Aotsuka S."/>
            <person name="Yoshikawa Y."/>
            <person name="Matsunawa H."/>
            <person name="Ichihara T."/>
            <person name="Shiohata N."/>
            <person name="Sano S."/>
            <person name="Moriya S."/>
            <person name="Momiyama H."/>
            <person name="Satoh N."/>
            <person name="Takami S."/>
            <person name="Terashima Y."/>
            <person name="Suzuki O."/>
            <person name="Nakagawa S."/>
            <person name="Senoh A."/>
            <person name="Mizoguchi H."/>
            <person name="Goto Y."/>
            <person name="Shimizu F."/>
            <person name="Wakebe H."/>
            <person name="Hishigaki H."/>
            <person name="Watanabe T."/>
            <person name="Sugiyama A."/>
            <person name="Takemoto M."/>
            <person name="Kawakami B."/>
            <person name="Yamazaki M."/>
            <person name="Watanabe K."/>
            <person name="Kumagai A."/>
            <person name="Itakura S."/>
            <person name="Fukuzumi Y."/>
            <person name="Fujimori Y."/>
            <person name="Komiyama M."/>
            <person name="Tashiro H."/>
            <person name="Tanigami A."/>
            <person name="Fujiwara T."/>
            <person name="Ono T."/>
            <person name="Yamada K."/>
            <person name="Fujii Y."/>
            <person name="Ozaki K."/>
            <person name="Hirao M."/>
            <person name="Ohmori Y."/>
            <person name="Kawabata A."/>
            <person name="Hikiji T."/>
            <person name="Kobatake N."/>
            <person name="Inagaki H."/>
            <person name="Ikema Y."/>
            <person name="Okamoto S."/>
            <person name="Okitani R."/>
            <person name="Kawakami T."/>
            <person name="Noguchi S."/>
            <person name="Itoh T."/>
            <person name="Shigeta K."/>
            <person name="Senba T."/>
            <person name="Matsumura K."/>
            <person name="Nakajima Y."/>
            <person name="Mizuno T."/>
            <person name="Morinaga M."/>
            <person name="Sasaki M."/>
            <person name="Togashi T."/>
            <person name="Oyama M."/>
            <person name="Hata H."/>
            <person name="Watanabe M."/>
            <person name="Komatsu T."/>
            <person name="Mizushima-Sugano J."/>
            <person name="Satoh T."/>
            <person name="Shirai Y."/>
            <person name="Takahashi Y."/>
            <person name="Nakagawa K."/>
            <person name="Okumura K."/>
            <person name="Nagase T."/>
            <person name="Nomura N."/>
            <person name="Kikuchi H."/>
            <person name="Masuho Y."/>
            <person name="Yamashita R."/>
            <person name="Nakai K."/>
            <person name="Yada T."/>
            <person name="Nakamura Y."/>
            <person name="Ohara O."/>
            <person name="Isogai T."/>
            <person name="Sugano S."/>
        </authorList>
    </citation>
    <scope>NUCLEOTIDE SEQUENCE [LARGE SCALE MRNA] (ISOFORMS 1 AND 2)</scope>
</reference>
<reference key="3">
    <citation type="journal article" date="2003" name="Nature">
        <title>The DNA sequence and analysis of human chromosome 6.</title>
        <authorList>
            <person name="Mungall A.J."/>
            <person name="Palmer S.A."/>
            <person name="Sims S.K."/>
            <person name="Edwards C.A."/>
            <person name="Ashurst J.L."/>
            <person name="Wilming L."/>
            <person name="Jones M.C."/>
            <person name="Horton R."/>
            <person name="Hunt S.E."/>
            <person name="Scott C.E."/>
            <person name="Gilbert J.G.R."/>
            <person name="Clamp M.E."/>
            <person name="Bethel G."/>
            <person name="Milne S."/>
            <person name="Ainscough R."/>
            <person name="Almeida J.P."/>
            <person name="Ambrose K.D."/>
            <person name="Andrews T.D."/>
            <person name="Ashwell R.I.S."/>
            <person name="Babbage A.K."/>
            <person name="Bagguley C.L."/>
            <person name="Bailey J."/>
            <person name="Banerjee R."/>
            <person name="Barker D.J."/>
            <person name="Barlow K.F."/>
            <person name="Bates K."/>
            <person name="Beare D.M."/>
            <person name="Beasley H."/>
            <person name="Beasley O."/>
            <person name="Bird C.P."/>
            <person name="Blakey S.E."/>
            <person name="Bray-Allen S."/>
            <person name="Brook J."/>
            <person name="Brown A.J."/>
            <person name="Brown J.Y."/>
            <person name="Burford D.C."/>
            <person name="Burrill W."/>
            <person name="Burton J."/>
            <person name="Carder C."/>
            <person name="Carter N.P."/>
            <person name="Chapman J.C."/>
            <person name="Clark S.Y."/>
            <person name="Clark G."/>
            <person name="Clee C.M."/>
            <person name="Clegg S."/>
            <person name="Cobley V."/>
            <person name="Collier R.E."/>
            <person name="Collins J.E."/>
            <person name="Colman L.K."/>
            <person name="Corby N.R."/>
            <person name="Coville G.J."/>
            <person name="Culley K.M."/>
            <person name="Dhami P."/>
            <person name="Davies J."/>
            <person name="Dunn M."/>
            <person name="Earthrowl M.E."/>
            <person name="Ellington A.E."/>
            <person name="Evans K.A."/>
            <person name="Faulkner L."/>
            <person name="Francis M.D."/>
            <person name="Frankish A."/>
            <person name="Frankland J."/>
            <person name="French L."/>
            <person name="Garner P."/>
            <person name="Garnett J."/>
            <person name="Ghori M.J."/>
            <person name="Gilby L.M."/>
            <person name="Gillson C.J."/>
            <person name="Glithero R.J."/>
            <person name="Grafham D.V."/>
            <person name="Grant M."/>
            <person name="Gribble S."/>
            <person name="Griffiths C."/>
            <person name="Griffiths M.N.D."/>
            <person name="Hall R."/>
            <person name="Halls K.S."/>
            <person name="Hammond S."/>
            <person name="Harley J.L."/>
            <person name="Hart E.A."/>
            <person name="Heath P.D."/>
            <person name="Heathcott R."/>
            <person name="Holmes S.J."/>
            <person name="Howden P.J."/>
            <person name="Howe K.L."/>
            <person name="Howell G.R."/>
            <person name="Huckle E."/>
            <person name="Humphray S.J."/>
            <person name="Humphries M.D."/>
            <person name="Hunt A.R."/>
            <person name="Johnson C.M."/>
            <person name="Joy A.A."/>
            <person name="Kay M."/>
            <person name="Keenan S.J."/>
            <person name="Kimberley A.M."/>
            <person name="King A."/>
            <person name="Laird G.K."/>
            <person name="Langford C."/>
            <person name="Lawlor S."/>
            <person name="Leongamornlert D.A."/>
            <person name="Leversha M."/>
            <person name="Lloyd C.R."/>
            <person name="Lloyd D.M."/>
            <person name="Loveland J.E."/>
            <person name="Lovell J."/>
            <person name="Martin S."/>
            <person name="Mashreghi-Mohammadi M."/>
            <person name="Maslen G.L."/>
            <person name="Matthews L."/>
            <person name="McCann O.T."/>
            <person name="McLaren S.J."/>
            <person name="McLay K."/>
            <person name="McMurray A."/>
            <person name="Moore M.J.F."/>
            <person name="Mullikin J.C."/>
            <person name="Niblett D."/>
            <person name="Nickerson T."/>
            <person name="Novik K.L."/>
            <person name="Oliver K."/>
            <person name="Overton-Larty E.K."/>
            <person name="Parker A."/>
            <person name="Patel R."/>
            <person name="Pearce A.V."/>
            <person name="Peck A.I."/>
            <person name="Phillimore B.J.C.T."/>
            <person name="Phillips S."/>
            <person name="Plumb R.W."/>
            <person name="Porter K.M."/>
            <person name="Ramsey Y."/>
            <person name="Ranby S.A."/>
            <person name="Rice C.M."/>
            <person name="Ross M.T."/>
            <person name="Searle S.M."/>
            <person name="Sehra H.K."/>
            <person name="Sheridan E."/>
            <person name="Skuce C.D."/>
            <person name="Smith S."/>
            <person name="Smith M."/>
            <person name="Spraggon L."/>
            <person name="Squares S.L."/>
            <person name="Steward C.A."/>
            <person name="Sycamore N."/>
            <person name="Tamlyn-Hall G."/>
            <person name="Tester J."/>
            <person name="Theaker A.J."/>
            <person name="Thomas D.W."/>
            <person name="Thorpe A."/>
            <person name="Tracey A."/>
            <person name="Tromans A."/>
            <person name="Tubby B."/>
            <person name="Wall M."/>
            <person name="Wallis J.M."/>
            <person name="West A.P."/>
            <person name="White S.S."/>
            <person name="Whitehead S.L."/>
            <person name="Whittaker H."/>
            <person name="Wild A."/>
            <person name="Willey D.J."/>
            <person name="Wilmer T.E."/>
            <person name="Wood J.M."/>
            <person name="Wray P.W."/>
            <person name="Wyatt J.C."/>
            <person name="Young L."/>
            <person name="Younger R.M."/>
            <person name="Bentley D.R."/>
            <person name="Coulson A."/>
            <person name="Durbin R.M."/>
            <person name="Hubbard T."/>
            <person name="Sulston J.E."/>
            <person name="Dunham I."/>
            <person name="Rogers J."/>
            <person name="Beck S."/>
        </authorList>
    </citation>
    <scope>NUCLEOTIDE SEQUENCE [LARGE SCALE GENOMIC DNA]</scope>
</reference>
<reference key="4">
    <citation type="journal article" date="2004" name="Genome Res.">
        <title>The status, quality, and expansion of the NIH full-length cDNA project: the Mammalian Gene Collection (MGC).</title>
        <authorList>
            <consortium name="The MGC Project Team"/>
        </authorList>
    </citation>
    <scope>NUCLEOTIDE SEQUENCE [LARGE SCALE MRNA] (ISOFORM 1)</scope>
    <source>
        <tissue>Liver</tissue>
        <tissue>Prostate</tissue>
        <tissue>Testis</tissue>
        <tissue>Uterus</tissue>
    </source>
</reference>
<reference key="5">
    <citation type="journal article" date="2007" name="BMC Genomics">
        <title>The full-ORF clone resource of the German cDNA consortium.</title>
        <authorList>
            <person name="Bechtel S."/>
            <person name="Rosenfelder H."/>
            <person name="Duda A."/>
            <person name="Schmidt C.P."/>
            <person name="Ernst U."/>
            <person name="Wellenreuther R."/>
            <person name="Mehrle A."/>
            <person name="Schuster C."/>
            <person name="Bahr A."/>
            <person name="Bloecker H."/>
            <person name="Heubner D."/>
            <person name="Hoerlein A."/>
            <person name="Michel G."/>
            <person name="Wedler H."/>
            <person name="Koehrer K."/>
            <person name="Ottenwaelder B."/>
            <person name="Poustka A."/>
            <person name="Wiemann S."/>
            <person name="Schupp I."/>
        </authorList>
    </citation>
    <scope>NUCLEOTIDE SEQUENCE [LARGE SCALE MRNA] OF 120-212 (ISOFORM 1)</scope>
    <source>
        <tissue>Uterus</tissue>
    </source>
</reference>
<reference key="6">
    <citation type="journal article" date="2003" name="J. Biol. Chem.">
        <title>Identification of mammalian Mediator subunits with similarities to yeast Mediator subunits Srb5, Srb6, Med11, and Rox3.</title>
        <authorList>
            <person name="Sato S."/>
            <person name="Tomomori-Sato C."/>
            <person name="Banks C.A.S."/>
            <person name="Sorokina I."/>
            <person name="Parmely T.J."/>
            <person name="Kong S.E."/>
            <person name="Jin J."/>
            <person name="Cai Y."/>
            <person name="Lane W.S."/>
            <person name="Brower C.S."/>
            <person name="Conaway R.C."/>
            <person name="Conaway J.W."/>
        </authorList>
    </citation>
    <scope>INTERACTION WITH MED18</scope>
</reference>
<reference key="7">
    <citation type="journal article" date="2004" name="Mol. Cell">
        <title>A set of consensus mammalian mediator subunits identified by multidimensional protein identification technology.</title>
        <authorList>
            <person name="Sato S."/>
            <person name="Tomomori-Sato C."/>
            <person name="Parmely T.J."/>
            <person name="Florens L."/>
            <person name="Zybailov B."/>
            <person name="Swanson S.K."/>
            <person name="Banks C.A.S."/>
            <person name="Jin J."/>
            <person name="Cai Y."/>
            <person name="Washburn M.P."/>
            <person name="Conaway J.W."/>
            <person name="Conaway R.C."/>
        </authorList>
    </citation>
    <scope>IDENTIFICATION BY MASS SPECTROMETRY</scope>
    <scope>IDENTIFICATION IN THE MEDIATOR COMPLEX</scope>
</reference>
<reference key="8">
    <citation type="journal article" date="2005" name="Mol. Cell">
        <title>MED1/TRAP220 exists predominantly in a TRAP/Mediator subpopulation enriched in RNA polymerase II and is required for ER-mediated transcription.</title>
        <authorList>
            <person name="Zhang X."/>
            <person name="Krutchinsky A."/>
            <person name="Fukuda A."/>
            <person name="Chen W."/>
            <person name="Yamamura S."/>
            <person name="Chait B.T."/>
            <person name="Roeder R.G."/>
        </authorList>
    </citation>
    <scope>INTERACTION WITH MED1; MED18; MED21; MED28; MED29 AND MED31</scope>
    <scope>IDENTIFICATION BY MASS SPECTROMETRY</scope>
    <scope>IDENTIFICATION IN THE MEDIATOR COMPLEX</scope>
    <scope>ASSOCIATION OF THE MEDIATOR COMPLEX WITH RNA POLYMERASE II</scope>
</reference>
<reference key="9">
    <citation type="journal article" date="2011" name="BMC Syst. Biol.">
        <title>Initial characterization of the human central proteome.</title>
        <authorList>
            <person name="Burkard T.R."/>
            <person name="Planyavsky M."/>
            <person name="Kaupe I."/>
            <person name="Breitwieser F.P."/>
            <person name="Buerckstuemmer T."/>
            <person name="Bennett K.L."/>
            <person name="Superti-Furga G."/>
            <person name="Colinge J."/>
        </authorList>
    </citation>
    <scope>IDENTIFICATION BY MASS SPECTROMETRY [LARGE SCALE ANALYSIS]</scope>
</reference>
<protein>
    <recommendedName>
        <fullName>Mediator of RNA polymerase II transcription subunit 20</fullName>
    </recommendedName>
    <alternativeName>
        <fullName>Mediator complex subunit 20</fullName>
    </alternativeName>
    <alternativeName>
        <fullName>TRF-proximal protein homolog</fullName>
        <shortName>hTRFP</shortName>
    </alternativeName>
</protein>
<proteinExistence type="evidence at protein level"/>
<sequence>MGVTCVSQMPVAEGKSVQQTVELLTRKLEMLGAEKQGTFCVDCETYHTAASTLGSQGQTGKLMYVMHNSEYPLSCFALFENGPCLIADTNFDVLMVKLKGFFQSAKASKIETRGTRYQYCDFLVKVGTVTMGPSARGISVEVEYGPCVVASDCWSLLLEFLQSFLGSHTPGAPAVFGNRHDAVYGPADTMVQYMELFNKIRKQQQVPVAGIR</sequence>
<keyword id="KW-0002">3D-structure</keyword>
<keyword id="KW-0010">Activator</keyword>
<keyword id="KW-0025">Alternative splicing</keyword>
<keyword id="KW-0903">Direct protein sequencing</keyword>
<keyword id="KW-0539">Nucleus</keyword>
<keyword id="KW-1267">Proteomics identification</keyword>
<keyword id="KW-1185">Reference proteome</keyword>
<keyword id="KW-0804">Transcription</keyword>
<keyword id="KW-0805">Transcription regulation</keyword>
<evidence type="ECO:0000250" key="1"/>
<evidence type="ECO:0000269" key="2">
    <source>
    </source>
</evidence>
<evidence type="ECO:0000269" key="3">
    <source>
    </source>
</evidence>
<evidence type="ECO:0000269" key="4">
    <source>
    </source>
</evidence>
<evidence type="ECO:0000269" key="5">
    <source>
    </source>
</evidence>
<evidence type="ECO:0000303" key="6">
    <source>
    </source>
</evidence>
<evidence type="ECO:0000305" key="7"/>
<evidence type="ECO:0007829" key="8">
    <source>
        <dbReference type="PDB" id="7EMF"/>
    </source>
</evidence>
<comment type="function">
    <text>Component of the Mediator complex, a coactivator involved in the regulated transcription of nearly all RNA polymerase II-dependent genes. Mediator functions as a bridge to convey information from gene-specific regulatory proteins to the basal RNA polymerase II transcription machinery. Mediator is recruited to promoters by direct interactions with regulatory proteins and serves as a scaffold for the assembly of a functional preinitiation complex with RNA polymerase II and the general transcription factors.</text>
</comment>
<comment type="subunit">
    <text evidence="1 2 3 4 5">Interacts with PPARG (By similarity). Component of the Mediator complex, which is composed of MED1, MED4, MED6, MED7, MED8, MED9, MED10, MED11, MED12, MED13, MED13L, MED14, MED15, MED16, MED17, MED18, MED19, MED20, MED21, MED22, MED23, MED24, MED25, MED26, MED27, MED29, MED30, MED31, CCNC, CDK8 and CDC2L6/CDK11. The MED12, MED13, CCNC and CDK8 subunits form a distinct module termed the CDK8 module. Mediator containing the CDK8 module is less active than Mediator lacking this module in supporting transcriptional activation. Individual preparations of the Mediator complex lacking one or more distinct subunits have been variously termed ARC, CRSP, DRIP, PC2, SMCC and TRAP.</text>
</comment>
<comment type="interaction">
    <interactant intactId="EBI-394644">
        <id>Q9H944</id>
    </interactant>
    <interactant intactId="EBI-11954519">
        <id>Q49AR9</id>
        <label>ANKS1A</label>
    </interactant>
    <organismsDiffer>false</organismsDiffer>
    <experiments>3</experiments>
</comment>
<comment type="interaction">
    <interactant intactId="EBI-394644">
        <id>Q9H944</id>
    </interactant>
    <interactant intactId="EBI-12102608">
        <id>Q6BCY4-2</id>
        <label>CYB5R2</label>
    </interactant>
    <organismsDiffer>false</organismsDiffer>
    <experiments>3</experiments>
</comment>
<comment type="interaction">
    <interactant intactId="EBI-394644">
        <id>Q9H944</id>
    </interactant>
    <interactant intactId="EBI-953772">
        <id>Q96DN0</id>
        <label>ERP27</label>
    </interactant>
    <organismsDiffer>false</organismsDiffer>
    <experiments>3</experiments>
</comment>
<comment type="interaction">
    <interactant intactId="EBI-394644">
        <id>Q9H944</id>
    </interactant>
    <interactant intactId="EBI-618165">
        <id>Q06547</id>
        <label>GABPB1</label>
    </interactant>
    <organismsDiffer>false</organismsDiffer>
    <experiments>3</experiments>
</comment>
<comment type="interaction">
    <interactant intactId="EBI-394644">
        <id>Q9H944</id>
    </interactant>
    <interactant intactId="EBI-10250211">
        <id>Q6IPE9</id>
        <label>MARK4</label>
    </interactant>
    <organismsDiffer>false</organismsDiffer>
    <experiments>3</experiments>
</comment>
<comment type="interaction">
    <interactant intactId="EBI-394644">
        <id>Q9H944</id>
    </interactant>
    <interactant intactId="EBI-394640">
        <id>Q9BUE0</id>
        <label>MED18</label>
    </interactant>
    <organismsDiffer>false</organismsDiffer>
    <experiments>26</experiments>
</comment>
<comment type="interaction">
    <interactant intactId="EBI-394644">
        <id>Q9H944</id>
    </interactant>
    <interactant intactId="EBI-394656">
        <id>Q9NX70</id>
        <label>MED29</label>
    </interactant>
    <organismsDiffer>false</organismsDiffer>
    <experiments>11</experiments>
</comment>
<comment type="interaction">
    <interactant intactId="EBI-394644">
        <id>Q9H944</id>
    </interactant>
    <interactant intactId="EBI-10232538">
        <id>Q8WWB5</id>
        <label>PIH1D2</label>
    </interactant>
    <organismsDiffer>false</organismsDiffer>
    <experiments>3</experiments>
</comment>
<comment type="interaction">
    <interactant intactId="EBI-394644">
        <id>Q9H944</id>
    </interactant>
    <interactant intactId="EBI-11974061">
        <id>Q9UIG4</id>
        <label>PSORS1C2</label>
    </interactant>
    <organismsDiffer>false</organismsDiffer>
    <experiments>3</experiments>
</comment>
<comment type="interaction">
    <interactant intactId="EBI-394644">
        <id>Q9H944</id>
    </interactant>
    <interactant intactId="EBI-12029182">
        <id>Q6ZRS2-3</id>
        <label>SRCAP</label>
    </interactant>
    <organismsDiffer>false</organismsDiffer>
    <experiments>3</experiments>
</comment>
<comment type="interaction">
    <interactant intactId="EBI-394644">
        <id>Q9H944</id>
    </interactant>
    <interactant intactId="EBI-11525489">
        <id>Q86WT6-2</id>
        <label>TRIM69</label>
    </interactant>
    <organismsDiffer>false</organismsDiffer>
    <experiments>3</experiments>
</comment>
<comment type="interaction">
    <interactant intactId="EBI-394644">
        <id>Q9H944</id>
    </interactant>
    <interactant intactId="EBI-765538">
        <id>P25490</id>
        <label>YY1</label>
    </interactant>
    <organismsDiffer>false</organismsDiffer>
    <experiments>3</experiments>
</comment>
<comment type="subcellular location">
    <subcellularLocation>
        <location evidence="7">Nucleus</location>
    </subcellularLocation>
</comment>
<comment type="alternative products">
    <event type="alternative splicing"/>
    <isoform>
        <id>Q9H944-1</id>
        <name>1</name>
        <sequence type="displayed"/>
    </isoform>
    <isoform>
        <id>Q9H944-2</id>
        <name>2</name>
        <sequence type="described" ref="VSP_057052"/>
    </isoform>
</comment>
<comment type="similarity">
    <text evidence="7">Belongs to the Mediator complex subunit 20 family.</text>
</comment>
<gene>
    <name type="primary">MED20</name>
    <name type="synonym">TRFP</name>
</gene>
<name>MED20_HUMAN</name>
<accession>Q9H944</accession>
<accession>B4DE08</accession>
<accession>O95821</accession>
<accession>Q5T8J4</accession>
<accession>Q9Y429</accession>
<dbReference type="EMBL" id="AF097725">
    <property type="protein sequence ID" value="AAD16169.1"/>
    <property type="molecule type" value="mRNA"/>
</dbReference>
<dbReference type="EMBL" id="AK023092">
    <property type="protein sequence ID" value="BAB14399.1"/>
    <property type="molecule type" value="mRNA"/>
</dbReference>
<dbReference type="EMBL" id="AK293412">
    <property type="protein sequence ID" value="BAG56919.1"/>
    <property type="molecule type" value="mRNA"/>
</dbReference>
<dbReference type="EMBL" id="AL160163">
    <property type="status" value="NOT_ANNOTATED_CDS"/>
    <property type="molecule type" value="Genomic_DNA"/>
</dbReference>
<dbReference type="EMBL" id="BC012618">
    <property type="protein sequence ID" value="AAH12618.1"/>
    <property type="molecule type" value="mRNA"/>
</dbReference>
<dbReference type="EMBL" id="BC019866">
    <property type="protein sequence ID" value="AAH19866.1"/>
    <property type="molecule type" value="mRNA"/>
</dbReference>
<dbReference type="EMBL" id="BC032552">
    <property type="protein sequence ID" value="AAH32552.1"/>
    <property type="molecule type" value="mRNA"/>
</dbReference>
<dbReference type="EMBL" id="BC040950">
    <property type="protein sequence ID" value="AAH40950.1"/>
    <property type="molecule type" value="mRNA"/>
</dbReference>
<dbReference type="EMBL" id="AL050196">
    <property type="protein sequence ID" value="CAB43314.1"/>
    <property type="molecule type" value="mRNA"/>
</dbReference>
<dbReference type="CCDS" id="CCDS4862.1">
    <molecule id="Q9H944-1"/>
</dbReference>
<dbReference type="CCDS" id="CCDS83085.1">
    <molecule id="Q9H944-2"/>
</dbReference>
<dbReference type="PIR" id="T08801">
    <property type="entry name" value="T08801"/>
</dbReference>
<dbReference type="RefSeq" id="NP_001292384.1">
    <property type="nucleotide sequence ID" value="NM_001305455.1"/>
</dbReference>
<dbReference type="RefSeq" id="NP_001292385.1">
    <property type="nucleotide sequence ID" value="NM_001305456.1"/>
</dbReference>
<dbReference type="RefSeq" id="NP_001292386.1">
    <molecule id="Q9H944-2"/>
    <property type="nucleotide sequence ID" value="NM_001305457.2"/>
</dbReference>
<dbReference type="RefSeq" id="NP_004266.2">
    <molecule id="Q9H944-1"/>
    <property type="nucleotide sequence ID" value="NM_004275.4"/>
</dbReference>
<dbReference type="PDB" id="7EMF">
    <property type="method" value="EM"/>
    <property type="resolution" value="3.50 A"/>
    <property type="chains" value="T=1-212"/>
</dbReference>
<dbReference type="PDB" id="7ENA">
    <property type="method" value="EM"/>
    <property type="resolution" value="4.07 A"/>
    <property type="chains" value="t=1-212"/>
</dbReference>
<dbReference type="PDB" id="7ENC">
    <property type="method" value="EM"/>
    <property type="resolution" value="4.13 A"/>
    <property type="chains" value="t=1-212"/>
</dbReference>
<dbReference type="PDB" id="7ENJ">
    <property type="method" value="EM"/>
    <property type="resolution" value="4.40 A"/>
    <property type="chains" value="T=1-212"/>
</dbReference>
<dbReference type="PDB" id="7LBM">
    <property type="method" value="EM"/>
    <property type="resolution" value="4.80 A"/>
    <property type="chains" value="l=1-212"/>
</dbReference>
<dbReference type="PDB" id="7NVR">
    <property type="method" value="EM"/>
    <property type="resolution" value="4.50 A"/>
    <property type="chains" value="f=1-212"/>
</dbReference>
<dbReference type="PDB" id="8GXQ">
    <property type="method" value="EM"/>
    <property type="resolution" value="5.04 A"/>
    <property type="chains" value="t=1-212"/>
</dbReference>
<dbReference type="PDB" id="8GXS">
    <property type="method" value="EM"/>
    <property type="resolution" value="4.16 A"/>
    <property type="chains" value="t=1-212"/>
</dbReference>
<dbReference type="PDB" id="8T9D">
    <property type="method" value="EM"/>
    <property type="resolution" value="4.66 A"/>
    <property type="chains" value="O=1-212"/>
</dbReference>
<dbReference type="PDB" id="8TQW">
    <property type="method" value="EM"/>
    <property type="resolution" value="8.20 A"/>
    <property type="chains" value="T=1-212"/>
</dbReference>
<dbReference type="PDB" id="8TRH">
    <property type="method" value="EM"/>
    <property type="resolution" value="3.70 A"/>
    <property type="chains" value="T=1-212"/>
</dbReference>
<dbReference type="PDBsum" id="7EMF"/>
<dbReference type="PDBsum" id="7ENA"/>
<dbReference type="PDBsum" id="7ENC"/>
<dbReference type="PDBsum" id="7ENJ"/>
<dbReference type="PDBsum" id="7LBM"/>
<dbReference type="PDBsum" id="7NVR"/>
<dbReference type="PDBsum" id="8GXQ"/>
<dbReference type="PDBsum" id="8GXS"/>
<dbReference type="PDBsum" id="8T9D"/>
<dbReference type="PDBsum" id="8TQW"/>
<dbReference type="PDBsum" id="8TRH"/>
<dbReference type="EMDB" id="EMD-12610"/>
<dbReference type="EMDB" id="EMD-23255"/>
<dbReference type="EMDB" id="EMD-31191"/>
<dbReference type="EMDB" id="EMD-31204"/>
<dbReference type="EMDB" id="EMD-31207"/>
<dbReference type="EMDB" id="EMD-31211"/>
<dbReference type="EMDB" id="EMD-34359"/>
<dbReference type="EMDB" id="EMD-34360"/>
<dbReference type="EMDB" id="EMD-41107"/>
<dbReference type="EMDB" id="EMD-41565"/>
<dbReference type="EMDB" id="EMD-41580"/>
<dbReference type="SMR" id="Q9H944"/>
<dbReference type="BioGRID" id="114862">
    <property type="interactions" value="184"/>
</dbReference>
<dbReference type="ComplexPortal" id="CPX-3227">
    <property type="entry name" value="Core mediator complex"/>
</dbReference>
<dbReference type="CORUM" id="Q9H944"/>
<dbReference type="DIP" id="DIP-31449N"/>
<dbReference type="FunCoup" id="Q9H944">
    <property type="interactions" value="4274"/>
</dbReference>
<dbReference type="IntAct" id="Q9H944">
    <property type="interactions" value="147"/>
</dbReference>
<dbReference type="MINT" id="Q9H944"/>
<dbReference type="STRING" id="9606.ENSP00000265350"/>
<dbReference type="GlyGen" id="Q9H944">
    <property type="glycosylation" value="1 site, 1 O-linked glycan (1 site)"/>
</dbReference>
<dbReference type="iPTMnet" id="Q9H944"/>
<dbReference type="MetOSite" id="Q9H944"/>
<dbReference type="PhosphoSitePlus" id="Q9H944"/>
<dbReference type="SwissPalm" id="Q9H944"/>
<dbReference type="BioMuta" id="MED20"/>
<dbReference type="DMDM" id="29428258"/>
<dbReference type="jPOST" id="Q9H944"/>
<dbReference type="MassIVE" id="Q9H944"/>
<dbReference type="PaxDb" id="9606-ENSP00000265350"/>
<dbReference type="PeptideAtlas" id="Q9H944"/>
<dbReference type="ProteomicsDB" id="3912"/>
<dbReference type="ProteomicsDB" id="81283">
    <molecule id="Q9H944-1"/>
</dbReference>
<dbReference type="Pumba" id="Q9H944"/>
<dbReference type="TopDownProteomics" id="Q9H944-1">
    <molecule id="Q9H944-1"/>
</dbReference>
<dbReference type="Antibodypedia" id="30105">
    <property type="antibodies" value="98 antibodies from 24 providers"/>
</dbReference>
<dbReference type="DNASU" id="9477"/>
<dbReference type="Ensembl" id="ENST00000265350.9">
    <molecule id="Q9H944-1"/>
    <property type="protein sequence ID" value="ENSP00000265350.4"/>
    <property type="gene ID" value="ENSG00000124641.16"/>
</dbReference>
<dbReference type="Ensembl" id="ENST00000409312.5">
    <molecule id="Q9H944-2"/>
    <property type="protein sequence ID" value="ENSP00000386816.1"/>
    <property type="gene ID" value="ENSG00000124641.16"/>
</dbReference>
<dbReference type="GeneID" id="9477"/>
<dbReference type="KEGG" id="hsa:9477"/>
<dbReference type="MANE-Select" id="ENST00000265350.9">
    <property type="protein sequence ID" value="ENSP00000265350.4"/>
    <property type="RefSeq nucleotide sequence ID" value="NM_004275.5"/>
    <property type="RefSeq protein sequence ID" value="NP_004266.2"/>
</dbReference>
<dbReference type="UCSC" id="uc003ork.4">
    <molecule id="Q9H944-1"/>
    <property type="organism name" value="human"/>
</dbReference>
<dbReference type="AGR" id="HGNC:16840"/>
<dbReference type="CTD" id="9477"/>
<dbReference type="DisGeNET" id="9477"/>
<dbReference type="GeneCards" id="MED20"/>
<dbReference type="HGNC" id="HGNC:16840">
    <property type="gene designation" value="MED20"/>
</dbReference>
<dbReference type="HPA" id="ENSG00000124641">
    <property type="expression patterns" value="Low tissue specificity"/>
</dbReference>
<dbReference type="MalaCards" id="MED20"/>
<dbReference type="MIM" id="612915">
    <property type="type" value="gene"/>
</dbReference>
<dbReference type="neXtProt" id="NX_Q9H944"/>
<dbReference type="OpenTargets" id="ENSG00000124641"/>
<dbReference type="PharmGKB" id="PA162395472"/>
<dbReference type="VEuPathDB" id="HostDB:ENSG00000124641"/>
<dbReference type="eggNOG" id="KOG4309">
    <property type="taxonomic scope" value="Eukaryota"/>
</dbReference>
<dbReference type="GeneTree" id="ENSGT00390000002060"/>
<dbReference type="HOGENOM" id="CLU_080044_1_0_1"/>
<dbReference type="InParanoid" id="Q9H944"/>
<dbReference type="OMA" id="FFVDCET"/>
<dbReference type="OrthoDB" id="1854899at2759"/>
<dbReference type="PAN-GO" id="Q9H944">
    <property type="GO annotations" value="3 GO annotations based on evolutionary models"/>
</dbReference>
<dbReference type="PhylomeDB" id="Q9H944"/>
<dbReference type="TreeFam" id="TF315156"/>
<dbReference type="PathwayCommons" id="Q9H944"/>
<dbReference type="Reactome" id="R-HSA-1989781">
    <property type="pathway name" value="PPARA activates gene expression"/>
</dbReference>
<dbReference type="Reactome" id="R-HSA-212436">
    <property type="pathway name" value="Generic Transcription Pathway"/>
</dbReference>
<dbReference type="Reactome" id="R-HSA-381340">
    <property type="pathway name" value="Transcriptional regulation of white adipocyte differentiation"/>
</dbReference>
<dbReference type="Reactome" id="R-HSA-9833110">
    <property type="pathway name" value="RSV-host interactions"/>
</dbReference>
<dbReference type="Reactome" id="R-HSA-9841922">
    <property type="pathway name" value="MLL4 and MLL3 complexes regulate expression of PPARG target genes in adipogenesis and hepatic steatosis"/>
</dbReference>
<dbReference type="SignaLink" id="Q9H944"/>
<dbReference type="SIGNOR" id="Q9H944"/>
<dbReference type="BioGRID-ORCS" id="9477">
    <property type="hits" value="679 hits in 1088 CRISPR screens"/>
</dbReference>
<dbReference type="ChiTaRS" id="MED20">
    <property type="organism name" value="human"/>
</dbReference>
<dbReference type="GenomeRNAi" id="9477"/>
<dbReference type="Pharos" id="Q9H944">
    <property type="development level" value="Tbio"/>
</dbReference>
<dbReference type="PRO" id="PR:Q9H944"/>
<dbReference type="Proteomes" id="UP000005640">
    <property type="component" value="Chromosome 6"/>
</dbReference>
<dbReference type="RNAct" id="Q9H944">
    <property type="molecule type" value="protein"/>
</dbReference>
<dbReference type="Bgee" id="ENSG00000124641">
    <property type="expression patterns" value="Expressed in secondary oocyte and 170 other cell types or tissues"/>
</dbReference>
<dbReference type="ExpressionAtlas" id="Q9H944">
    <property type="expression patterns" value="baseline and differential"/>
</dbReference>
<dbReference type="GO" id="GO:0070847">
    <property type="term" value="C:core mediator complex"/>
    <property type="evidence" value="ECO:0000353"/>
    <property type="project" value="ComplexPortal"/>
</dbReference>
<dbReference type="GO" id="GO:0016592">
    <property type="term" value="C:mediator complex"/>
    <property type="evidence" value="ECO:0000318"/>
    <property type="project" value="GO_Central"/>
</dbReference>
<dbReference type="GO" id="GO:0005654">
    <property type="term" value="C:nucleoplasm"/>
    <property type="evidence" value="ECO:0000304"/>
    <property type="project" value="Reactome"/>
</dbReference>
<dbReference type="GO" id="GO:0005634">
    <property type="term" value="C:nucleus"/>
    <property type="evidence" value="ECO:0000314"/>
    <property type="project" value="ComplexPortal"/>
</dbReference>
<dbReference type="GO" id="GO:0003899">
    <property type="term" value="F:DNA-directed RNA polymerase activity"/>
    <property type="evidence" value="ECO:0000303"/>
    <property type="project" value="UniProtKB"/>
</dbReference>
<dbReference type="GO" id="GO:0003713">
    <property type="term" value="F:transcription coactivator activity"/>
    <property type="evidence" value="ECO:0000318"/>
    <property type="project" value="GO_Central"/>
</dbReference>
<dbReference type="GO" id="GO:0006351">
    <property type="term" value="P:DNA-templated transcription"/>
    <property type="evidence" value="ECO:0000303"/>
    <property type="project" value="UniProtKB"/>
</dbReference>
<dbReference type="GO" id="GO:0032968">
    <property type="term" value="P:positive regulation of transcription elongation by RNA polymerase II"/>
    <property type="evidence" value="ECO:0000303"/>
    <property type="project" value="ComplexPortal"/>
</dbReference>
<dbReference type="GO" id="GO:0060261">
    <property type="term" value="P:positive regulation of transcription initiation by RNA polymerase II"/>
    <property type="evidence" value="ECO:0000303"/>
    <property type="project" value="ComplexPortal"/>
</dbReference>
<dbReference type="GO" id="GO:0006357">
    <property type="term" value="P:regulation of transcription by RNA polymerase II"/>
    <property type="evidence" value="ECO:0000318"/>
    <property type="project" value="GO_Central"/>
</dbReference>
<dbReference type="GO" id="GO:0051123">
    <property type="term" value="P:RNA polymerase II preinitiation complex assembly"/>
    <property type="evidence" value="ECO:0000303"/>
    <property type="project" value="ComplexPortal"/>
</dbReference>
<dbReference type="GO" id="GO:0035914">
    <property type="term" value="P:skeletal muscle cell differentiation"/>
    <property type="evidence" value="ECO:0007669"/>
    <property type="project" value="Ensembl"/>
</dbReference>
<dbReference type="GO" id="GO:0006366">
    <property type="term" value="P:transcription by RNA polymerase II"/>
    <property type="evidence" value="ECO:0000304"/>
    <property type="project" value="ProtInc"/>
</dbReference>
<dbReference type="InterPro" id="IPR013921">
    <property type="entry name" value="Mediator_Med20"/>
</dbReference>
<dbReference type="PANTHER" id="PTHR12465:SF0">
    <property type="entry name" value="MEDIATOR OF RNA POLYMERASE II TRANSCRIPTION SUBUNIT 20"/>
    <property type="match status" value="1"/>
</dbReference>
<dbReference type="PANTHER" id="PTHR12465">
    <property type="entry name" value="UBIQUITIN SPECIFIC PROTEASE HOMOLOG 49"/>
    <property type="match status" value="1"/>
</dbReference>
<dbReference type="Pfam" id="PF08612">
    <property type="entry name" value="Med20"/>
    <property type="match status" value="1"/>
</dbReference>